<feature type="chain" id="PRO_0000057949" description="Centromere protein R">
    <location>
        <begin position="1"/>
        <end position="177"/>
    </location>
</feature>
<feature type="region of interest" description="DD1">
    <location>
        <begin position="20"/>
        <end position="50"/>
    </location>
</feature>
<feature type="region of interest" description="Disordered" evidence="3">
    <location>
        <begin position="41"/>
        <end position="81"/>
    </location>
</feature>
<feature type="coiled-coil region" evidence="2">
    <location>
        <begin position="83"/>
        <end position="113"/>
    </location>
</feature>
<feature type="short sequence motif" description="LXXLL motif">
    <location>
        <begin position="9"/>
        <end position="13"/>
    </location>
</feature>
<feature type="short sequence motif" description="Nuclear localization signal">
    <location>
        <begin position="63"/>
        <end position="66"/>
    </location>
</feature>
<feature type="short sequence motif" description="LXXIL motif">
    <location>
        <begin position="172"/>
        <end position="176"/>
    </location>
</feature>
<feature type="compositionally biased region" description="Polar residues" evidence="3">
    <location>
        <begin position="41"/>
        <end position="50"/>
    </location>
</feature>
<feature type="modified residue" description="Phosphoserine" evidence="18 19 20">
    <location>
        <position position="17"/>
    </location>
</feature>
<feature type="modified residue" description="Phosphoserine" evidence="17">
    <location>
        <position position="28"/>
    </location>
</feature>
<feature type="modified residue" description="Phosphoserine" evidence="19 20">
    <location>
        <position position="71"/>
    </location>
</feature>
<feature type="cross-link" description="Glycyl lysine isopeptide (Lys-Gly) (interchain with G-Cter in SUMO2)" evidence="21">
    <location>
        <position position="8"/>
    </location>
</feature>
<feature type="cross-link" description="Glycyl lysine isopeptide (Lys-Gly) (interchain with G-Cter in SUMO2)" evidence="21">
    <location>
        <position position="22"/>
    </location>
</feature>
<feature type="splice variant" id="VSP_010831" description="In isoform 5." evidence="14">
    <original>MP</original>
    <variation>MPFAPVAQARVQWHDFRSLQHLLPAFKRFSCLSLGSSWDYS</variation>
    <location>
        <begin position="1"/>
        <end position="2"/>
    </location>
</feature>
<feature type="splice variant" id="VSP_010832" description="In isoform 4." evidence="16">
    <location>
        <begin position="63"/>
        <end position="177"/>
    </location>
</feature>
<feature type="splice variant" id="VSP_010833" description="In isoform 3." evidence="15">
    <location>
        <begin position="112"/>
        <end position="177"/>
    </location>
</feature>
<feature type="splice variant" id="VSP_010834" description="In isoform 2." evidence="15">
    <original>ASRHLDSYEFLKAILN</original>
    <variation>GQPQMSQPL</variation>
    <location>
        <begin position="162"/>
        <end position="177"/>
    </location>
</feature>
<feature type="sequence variant" id="VAR_048691" description="In dbSNP:rs1058057.">
    <original>I</original>
    <variation>V</variation>
    <location>
        <position position="30"/>
    </location>
</feature>
<feature type="mutagenesis site" description="Decreased interaction with nuclear receptors." evidence="4">
    <original>L</original>
    <variation>A</variation>
    <location>
        <position position="9"/>
    </location>
</feature>
<feature type="mutagenesis site" description="Loss of repressor function." evidence="6 9">
    <original>S</original>
    <variation>A</variation>
    <location>
        <position position="28"/>
    </location>
</feature>
<feature type="mutagenesis site" description="Abolishes localization to nucleus." evidence="8">
    <location>
        <begin position="63"/>
        <end position="66"/>
    </location>
</feature>
<feature type="mutagenesis site" description="Abolishes localization to nucleus." evidence="7">
    <original>KRK</original>
    <variation>AAA</variation>
    <location>
        <begin position="63"/>
        <end position="65"/>
    </location>
</feature>
<feature type="mutagenesis site" description="Abolishes dimerization, but not interactions with nuclear receptors; when associated with R-96." evidence="6">
    <original>L</original>
    <variation>R</variation>
    <location>
        <position position="89"/>
    </location>
</feature>
<feature type="mutagenesis site" description="Abolishes dimerization, but not interactions with nuclear receptors; when associated with R-89." evidence="6">
    <original>L</original>
    <variation>R</variation>
    <location>
        <position position="96"/>
    </location>
</feature>
<feature type="mutagenesis site" description="Abolishes interaction with nuclear receptors." evidence="4">
    <original>LKAIL</original>
    <variation>AKAAA</variation>
    <location>
        <begin position="172"/>
        <end position="176"/>
    </location>
</feature>
<feature type="helix" evidence="22">
    <location>
        <begin position="85"/>
        <end position="104"/>
    </location>
</feature>
<feature type="helix" evidence="22">
    <location>
        <begin position="109"/>
        <end position="113"/>
    </location>
</feature>
<feature type="helix" evidence="22">
    <location>
        <begin position="117"/>
        <end position="123"/>
    </location>
</feature>
<feature type="helix" evidence="22">
    <location>
        <begin position="132"/>
        <end position="149"/>
    </location>
</feature>
<feature type="helix" evidence="22">
    <location>
        <begin position="168"/>
        <end position="176"/>
    </location>
</feature>
<keyword id="KW-0002">3D-structure</keyword>
<keyword id="KW-0010">Activator</keyword>
<keyword id="KW-0025">Alternative splicing</keyword>
<keyword id="KW-0053">Apoptosis</keyword>
<keyword id="KW-0131">Cell cycle</keyword>
<keyword id="KW-0132">Cell division</keyword>
<keyword id="KW-0137">Centromere</keyword>
<keyword id="KW-0158">Chromosome</keyword>
<keyword id="KW-0175">Coiled coil</keyword>
<keyword id="KW-0963">Cytoplasm</keyword>
<keyword id="KW-1017">Isopeptide bond</keyword>
<keyword id="KW-0995">Kinetochore</keyword>
<keyword id="KW-0498">Mitosis</keyword>
<keyword id="KW-0539">Nucleus</keyword>
<keyword id="KW-0597">Phosphoprotein</keyword>
<keyword id="KW-1267">Proteomics identification</keyword>
<keyword id="KW-1185">Reference proteome</keyword>
<keyword id="KW-0678">Repressor</keyword>
<keyword id="KW-0804">Transcription</keyword>
<keyword id="KW-0805">Transcription regulation</keyword>
<keyword id="KW-0832">Ubl conjugation</keyword>
<sequence length="177" mass="20194">MPVKRSLKLDGLLEENSFDPSKITRKKSVITYSPTTGTCQMSLFASPTSSEEQKHRNGLSNEKRKKLNHPSLTESKESTTKDNDEFMMLLSKVEKLSEEIMEIMQNLSSIQALEGSRELENLIGISCASHFLKREMQKTKELMTKVNKQKLFEKSTGLPHKASRHLDSYEFLKAILN</sequence>
<proteinExistence type="evidence at protein level"/>
<protein>
    <recommendedName>
        <fullName>Centromere protein R</fullName>
        <shortName>CENP-R</shortName>
    </recommendedName>
    <alternativeName>
        <fullName>Beta-3-endonexin</fullName>
    </alternativeName>
    <alternativeName>
        <fullName>Integrin beta-3-binding protein</fullName>
    </alternativeName>
    <alternativeName>
        <fullName>Nuclear receptor-interacting factor 3</fullName>
    </alternativeName>
</protein>
<comment type="function">
    <text evidence="6 8 9 10 12">Transcription coregulator that can have both coactivator and corepressor functions. Isoform 1, but not other isoforms, is involved in the coactivation of nuclear receptors for retinoid X (RXRs) and thyroid hormone (TRs) in a ligand-dependent fashion. In contrast, it does not coactivate nuclear receptors for retinoic acid, vitamin D, progesterone receptor, nor glucocorticoid. Acts as a coactivator for estrogen receptor alpha. Acts as a transcriptional corepressor via its interaction with the NFKB1 NF-kappa-B subunit, possibly by interfering with the transactivation domain of NFKB1. Induces apoptosis in breast cancer cells, but not in other cancer cells, via a caspase-2 mediated pathway that involves mitochondrial membrane permeabilization but does not require other caspases. May also act as an inhibitor of cyclin A-associated kinase. Also acts a component of the CENPA-CAD (nucleosome distal) complex, a complex recruited to centromeres which is involved in assembly of kinetochore proteins, mitotic progression and chromosome segregation. May be involved in incorporation of newly synthesized CENPA into centromeres via its interaction with the CENPA-NAC complex.</text>
</comment>
<comment type="subunit">
    <text evidence="1 4 5 8 10 11 12 13">Homodimer; mediated by the coiled coil domain. Isoform 3, but not other isoforms, interacts with the cytoplasmic tail of integrin ITGB3. The relevance of the interaction with ITGB3 is however uncertain, since isoform 3 is mainly nuclear. Interacts with CCNA2 and MTA1. Interacts with NFKB1 NF-kappa-B subunit. Component of the CENPA-CAD complex, composed of CENPI, CENPK, CENPL, CENPO, CENPP, CENPQ, CENPR and CENPS. The CENPA-CAD complex interacts with the CENPA-NAC complex, at least composed of CENPA, CENPC, CENPH, CENPM, CENPN, CENPT and CENPU. Interacts with TASOR (By similarity).</text>
</comment>
<comment type="interaction">
    <interactant intactId="EBI-712105">
        <id>Q13352</id>
    </interactant>
    <interactant intactId="EBI-17183751">
        <id>X5D778</id>
        <label>ANKRD11</label>
    </interactant>
    <organismsDiffer>false</organismsDiffer>
    <experiments>3</experiments>
</comment>
<comment type="interaction">
    <interactant intactId="EBI-712105">
        <id>Q13352</id>
    </interactant>
    <interactant intactId="EBI-638194">
        <id>P53365</id>
        <label>ARFIP2</label>
    </interactant>
    <organismsDiffer>false</organismsDiffer>
    <experiments>4</experiments>
</comment>
<comment type="interaction">
    <interactant intactId="EBI-712105">
        <id>Q13352</id>
    </interactant>
    <interactant intactId="EBI-10988864">
        <id>P46379-2</id>
        <label>BAG6</label>
    </interactant>
    <organismsDiffer>false</organismsDiffer>
    <experiments>3</experiments>
</comment>
<comment type="interaction">
    <interactant intactId="EBI-712105">
        <id>Q13352</id>
    </interactant>
    <interactant intactId="EBI-725606">
        <id>Q9NWQ9</id>
        <label>C14orf119</label>
    </interactant>
    <organismsDiffer>false</organismsDiffer>
    <experiments>3</experiments>
</comment>
<comment type="interaction">
    <interactant intactId="EBI-712105">
        <id>Q13352</id>
    </interactant>
    <interactant intactId="EBI-2515234">
        <id>Q71F23</id>
        <label>CENPU</label>
    </interactant>
    <organismsDiffer>false</organismsDiffer>
    <experiments>5</experiments>
</comment>
<comment type="interaction">
    <interactant intactId="EBI-712105">
        <id>Q13352</id>
    </interactant>
    <interactant intactId="EBI-739994">
        <id>Q9Y5P4</id>
        <label>CERT1</label>
    </interactant>
    <organismsDiffer>false</organismsDiffer>
    <experiments>4</experiments>
</comment>
<comment type="interaction">
    <interactant intactId="EBI-712105">
        <id>Q13352</id>
    </interactant>
    <interactant intactId="EBI-395638">
        <id>O14645</id>
        <label>DNALI1</label>
    </interactant>
    <organismsDiffer>false</organismsDiffer>
    <experiments>3</experiments>
</comment>
<comment type="interaction">
    <interactant intactId="EBI-712105">
        <id>Q13352</id>
    </interactant>
    <interactant intactId="EBI-743105">
        <id>Q5JVL4</id>
        <label>EFHC1</label>
    </interactant>
    <organismsDiffer>false</organismsDiffer>
    <experiments>3</experiments>
</comment>
<comment type="interaction">
    <interactant intactId="EBI-712105">
        <id>Q13352</id>
    </interactant>
    <interactant intactId="EBI-348399">
        <id>P22607</id>
        <label>FGFR3</label>
    </interactant>
    <organismsDiffer>false</organismsDiffer>
    <experiments>3</experiments>
</comment>
<comment type="interaction">
    <interactant intactId="EBI-712105">
        <id>Q13352</id>
    </interactant>
    <interactant intactId="EBI-852851">
        <id>P01100</id>
        <label>FOS</label>
    </interactant>
    <organismsDiffer>false</organismsDiffer>
    <experiments>3</experiments>
</comment>
<comment type="interaction">
    <interactant intactId="EBI-712105">
        <id>Q13352</id>
    </interactant>
    <interactant intactId="EBI-2552594">
        <id>P50440</id>
        <label>GATM</label>
    </interactant>
    <organismsDiffer>false</organismsDiffer>
    <experiments>3</experiments>
</comment>
<comment type="interaction">
    <interactant intactId="EBI-712105">
        <id>Q13352</id>
    </interactant>
    <interactant intactId="EBI-401755">
        <id>P62993</id>
        <label>GRB2</label>
    </interactant>
    <organismsDiffer>false</organismsDiffer>
    <experiments>3</experiments>
</comment>
<comment type="interaction">
    <interactant intactId="EBI-712105">
        <id>Q13352</id>
    </interactant>
    <interactant intactId="EBI-740290">
        <id>Q969Y2</id>
        <label>GTPBP3</label>
    </interactant>
    <organismsDiffer>false</organismsDiffer>
    <experiments>3</experiments>
</comment>
<comment type="interaction">
    <interactant intactId="EBI-712105">
        <id>Q13352</id>
    </interactant>
    <interactant intactId="EBI-350145">
        <id>P01112</id>
        <label>HRAS</label>
    </interactant>
    <organismsDiffer>false</organismsDiffer>
    <experiments>3</experiments>
</comment>
<comment type="interaction">
    <interactant intactId="EBI-712105">
        <id>Q13352</id>
    </interactant>
    <interactant intactId="EBI-719620">
        <id>Q00613</id>
        <label>HSF1</label>
    </interactant>
    <organismsDiffer>false</organismsDiffer>
    <experiments>3</experiments>
</comment>
<comment type="interaction">
    <interactant intactId="EBI-712105">
        <id>Q13352</id>
    </interactant>
    <interactant intactId="EBI-7116203">
        <id>O75031</id>
        <label>HSF2BP</label>
    </interactant>
    <organismsDiffer>false</organismsDiffer>
    <experiments>3</experiments>
</comment>
<comment type="interaction">
    <interactant intactId="EBI-712105">
        <id>Q13352</id>
    </interactant>
    <interactant intactId="EBI-12401561">
        <id>Q6ICG6-3</id>
        <label>KIAA0930</label>
    </interactant>
    <organismsDiffer>false</organismsDiffer>
    <experiments>3</experiments>
</comment>
<comment type="interaction">
    <interactant intactId="EBI-712105">
        <id>Q13352</id>
    </interactant>
    <interactant intactId="EBI-2125614">
        <id>Q9BVG8</id>
        <label>KIFC3</label>
    </interactant>
    <organismsDiffer>false</organismsDiffer>
    <experiments>3</experiments>
</comment>
<comment type="interaction">
    <interactant intactId="EBI-712105">
        <id>Q13352</id>
    </interactant>
    <interactant intactId="EBI-14069005">
        <id>Q9BVG8-5</id>
        <label>KIFC3</label>
    </interactant>
    <organismsDiffer>false</organismsDiffer>
    <experiments>3</experiments>
</comment>
<comment type="interaction">
    <interactant intactId="EBI-712105">
        <id>Q13352</id>
    </interactant>
    <interactant intactId="EBI-948266">
        <id>O14901</id>
        <label>KLF11</label>
    </interactant>
    <organismsDiffer>false</organismsDiffer>
    <experiments>6</experiments>
</comment>
<comment type="interaction">
    <interactant intactId="EBI-712105">
        <id>Q13352</id>
    </interactant>
    <interactant intactId="EBI-4314821">
        <id>Q13449</id>
        <label>LSAMP</label>
    </interactant>
    <organismsDiffer>false</organismsDiffer>
    <experiments>3</experiments>
</comment>
<comment type="interaction">
    <interactant intactId="EBI-712105">
        <id>Q13352</id>
    </interactant>
    <interactant intactId="EBI-713568">
        <id>P45984</id>
        <label>MAPK9</label>
    </interactant>
    <organismsDiffer>false</organismsDiffer>
    <experiments>3</experiments>
</comment>
<comment type="interaction">
    <interactant intactId="EBI-712105">
        <id>Q13352</id>
    </interactant>
    <interactant intactId="EBI-8025850">
        <id>O14770-4</id>
        <label>MEIS2</label>
    </interactant>
    <organismsDiffer>false</organismsDiffer>
    <experiments>3</experiments>
</comment>
<comment type="interaction">
    <interactant intactId="EBI-712105">
        <id>Q13352</id>
    </interactant>
    <interactant intactId="EBI-16439278">
        <id>Q6FHY5</id>
        <label>MEOX2</label>
    </interactant>
    <organismsDiffer>false</organismsDiffer>
    <experiments>3</experiments>
</comment>
<comment type="interaction">
    <interactant intactId="EBI-712105">
        <id>Q13352</id>
    </interactant>
    <interactant intactId="EBI-11991020">
        <id>A6NI15</id>
        <label>MSGN1</label>
    </interactant>
    <organismsDiffer>false</organismsDiffer>
    <experiments>3</experiments>
</comment>
<comment type="interaction">
    <interactant intactId="EBI-712105">
        <id>Q13352</id>
    </interactant>
    <interactant intactId="EBI-1042642">
        <id>Q9H7Z3</id>
        <label>NRDE2</label>
    </interactant>
    <organismsDiffer>false</organismsDiffer>
    <experiments>3</experiments>
</comment>
<comment type="interaction">
    <interactant intactId="EBI-712105">
        <id>Q13352</id>
    </interactant>
    <interactant intactId="EBI-741158">
        <id>Q96HA8</id>
        <label>NTAQ1</label>
    </interactant>
    <organismsDiffer>false</organismsDiffer>
    <experiments>3</experiments>
</comment>
<comment type="interaction">
    <interactant intactId="EBI-712105">
        <id>Q13352</id>
    </interactant>
    <interactant intactId="EBI-2811583">
        <id>Q9BVL2</id>
        <label>NUP58</label>
    </interactant>
    <organismsDiffer>false</organismsDiffer>
    <experiments>6</experiments>
</comment>
<comment type="interaction">
    <interactant intactId="EBI-712105">
        <id>Q13352</id>
    </interactant>
    <interactant intactId="EBI-741171">
        <id>Q96AL5</id>
        <label>PBX3</label>
    </interactant>
    <organismsDiffer>false</organismsDiffer>
    <experiments>3</experiments>
</comment>
<comment type="interaction">
    <interactant intactId="EBI-712105">
        <id>Q13352</id>
    </interactant>
    <interactant intactId="EBI-10232538">
        <id>Q8WWB5</id>
        <label>PIH1D2</label>
    </interactant>
    <organismsDiffer>false</organismsDiffer>
    <experiments>7</experiments>
</comment>
<comment type="interaction">
    <interactant intactId="EBI-712105">
        <id>Q13352</id>
    </interactant>
    <interactant intactId="EBI-79893">
        <id>Q92569</id>
        <label>PIK3R3</label>
    </interactant>
    <organismsDiffer>false</organismsDiffer>
    <experiments>3</experiments>
</comment>
<comment type="interaction">
    <interactant intactId="EBI-712105">
        <id>Q13352</id>
    </interactant>
    <interactant intactId="EBI-745098">
        <id>P62491</id>
        <label>RAB11A</label>
    </interactant>
    <organismsDiffer>false</organismsDiffer>
    <experiments>3</experiments>
</comment>
<comment type="interaction">
    <interactant intactId="EBI-712105">
        <id>Q13352</id>
    </interactant>
    <interactant intactId="EBI-12004298">
        <id>O75971-2</id>
        <label>SNAPC5</label>
    </interactant>
    <organismsDiffer>false</organismsDiffer>
    <experiments>3</experiments>
</comment>
<comment type="interaction">
    <interactant intactId="EBI-712105">
        <id>Q13352</id>
    </interactant>
    <interactant intactId="EBI-3921347">
        <id>P51687</id>
        <label>SUOX</label>
    </interactant>
    <organismsDiffer>false</organismsDiffer>
    <experiments>3</experiments>
</comment>
<comment type="interaction">
    <interactant intactId="EBI-712105">
        <id>Q13352</id>
    </interactant>
    <interactant intactId="EBI-11059915">
        <id>Q8N7C3</id>
        <label>TRIML2</label>
    </interactant>
    <organismsDiffer>false</organismsDiffer>
    <experiments>3</experiments>
</comment>
<comment type="interaction">
    <interactant intactId="EBI-712105">
        <id>Q13352</id>
    </interactant>
    <interactant intactId="EBI-743128">
        <id>P14927</id>
        <label>UQCRB</label>
    </interactant>
    <organismsDiffer>false</organismsDiffer>
    <experiments>3</experiments>
</comment>
<comment type="interaction">
    <interactant intactId="EBI-712105">
        <id>Q13352</id>
    </interactant>
    <interactant intactId="EBI-739895">
        <id>Q8N6Y0</id>
        <label>USHBP1</label>
    </interactant>
    <organismsDiffer>false</organismsDiffer>
    <experiments>3</experiments>
</comment>
<comment type="interaction">
    <interactant intactId="EBI-712105">
        <id>Q13352</id>
    </interactant>
    <interactant intactId="EBI-2511991">
        <id>Q9Y2K6</id>
        <label>USP20</label>
    </interactant>
    <organismsDiffer>false</organismsDiffer>
    <experiments>3</experiments>
</comment>
<comment type="interaction">
    <interactant intactId="EBI-10175826">
        <id>Q13352-5</id>
    </interactant>
    <interactant intactId="EBI-638194">
        <id>P53365</id>
        <label>ARFIP2</label>
    </interactant>
    <organismsDiffer>false</organismsDiffer>
    <experiments>3</experiments>
</comment>
<comment type="interaction">
    <interactant intactId="EBI-10175826">
        <id>Q13352-5</id>
    </interactant>
    <interactant intactId="EBI-2125614">
        <id>Q9BVG8</id>
        <label>KIFC3</label>
    </interactant>
    <organismsDiffer>false</organismsDiffer>
    <experiments>3</experiments>
</comment>
<comment type="interaction">
    <interactant intactId="EBI-10175826">
        <id>Q13352-5</id>
    </interactant>
    <interactant intactId="EBI-10232538">
        <id>Q8WWB5</id>
        <label>PIH1D2</label>
    </interactant>
    <organismsDiffer>false</organismsDiffer>
    <experiments>3</experiments>
</comment>
<comment type="interaction">
    <interactant intactId="EBI-10175826">
        <id>Q13352-5</id>
    </interactant>
    <interactant intactId="EBI-10175830">
        <id>B2RDC9</id>
    </interactant>
    <organismsDiffer>false</organismsDiffer>
    <experiments>3</experiments>
</comment>
<comment type="subcellular location">
    <molecule>Isoform 1</molecule>
    <subcellularLocation>
        <location>Nucleus</location>
    </subcellularLocation>
    <subcellularLocation>
        <location>Chromosome</location>
        <location>Centromere</location>
    </subcellularLocation>
    <subcellularLocation>
        <location>Chromosome</location>
        <location>Centromere</location>
        <location>Kinetochore</location>
    </subcellularLocation>
</comment>
<comment type="subcellular location">
    <molecule>Isoform 2</molecule>
    <subcellularLocation>
        <location>Nucleus</location>
    </subcellularLocation>
</comment>
<comment type="subcellular location">
    <molecule>Isoform 3</molecule>
    <subcellularLocation>
        <location>Nucleus</location>
    </subcellularLocation>
    <subcellularLocation>
        <location>Cytoplasm</location>
    </subcellularLocation>
    <text>Isoform 3 is predominantly nuclear and weakly cytoplasmic.</text>
</comment>
<comment type="subcellular location">
    <molecule>Isoform 4</molecule>
    <subcellularLocation>
        <location>Cytoplasm</location>
    </subcellularLocation>
</comment>
<comment type="alternative products">
    <event type="alternative splicing"/>
    <isoform>
        <id>Q13352-1</id>
        <name>1</name>
        <sequence type="displayed"/>
    </isoform>
    <isoform>
        <id>Q13352-2</id>
        <name>2</name>
        <name>Long</name>
        <name>EnL</name>
        <name>En-L</name>
        <sequence type="described" ref="VSP_010834"/>
    </isoform>
    <isoform>
        <id>Q13352-3</id>
        <name>3</name>
        <name>Short</name>
        <name>EnS</name>
        <name>En-S</name>
        <sequence type="described" ref="VSP_010833"/>
    </isoform>
    <isoform>
        <id>Q13352-4</id>
        <name>4</name>
        <sequence type="described" ref="VSP_010832"/>
    </isoform>
    <isoform>
        <id>Q13352-5</id>
        <name>5</name>
        <sequence type="described" ref="VSP_010831"/>
    </isoform>
</comment>
<comment type="tissue specificity">
    <text evidence="7 13">Widely expressed. Expressed in spleen, thymus, prostate, ovary, small intestine and white blood cells. Highly expressed in testis and colon. Isoform 4 is expressed in platelets, lymphocytes and granulocytes.</text>
</comment>
<comment type="induction">
    <text evidence="10">By estrogen.</text>
</comment>
<comment type="domain">
    <text evidence="9">The DD1 domain (also called RepD1 domain) mediates the corepressor function and is essential in the triggering of apoptosis.</text>
</comment>
<comment type="domain">
    <text evidence="9">Contains one Leu-Xaa-Xaa-Leu-Leu (LXXLL) motif, a motif known to be important for the association with nuclear receptors. Such motif, which is required for an efficient association with nuclear receptors, is however not essential.</text>
</comment>
<comment type="domain">
    <text evidence="9">Contains one Leu-Xaa-Xaa-Ile-Leu (LXXIL) motif, which is essential for the association with nuclear receptors.</text>
</comment>
<comment type="sequence caution" evidence="16">
    <conflict type="erroneous initiation">
        <sequence resource="EMBL-CDS" id="AAH14385"/>
    </conflict>
    <text>Truncated N-terminus.</text>
</comment>
<gene>
    <name type="primary">ITGB3BP</name>
    <name type="synonym">CENPR</name>
    <name type="synonym">NRIF3</name>
</gene>
<evidence type="ECO:0000250" key="1">
    <source>
        <dbReference type="UniProtKB" id="Q9CQ82"/>
    </source>
</evidence>
<evidence type="ECO:0000255" key="2"/>
<evidence type="ECO:0000256" key="3">
    <source>
        <dbReference type="SAM" id="MobiDB-lite"/>
    </source>
</evidence>
<evidence type="ECO:0000269" key="4">
    <source>
    </source>
</evidence>
<evidence type="ECO:0000269" key="5">
    <source>
    </source>
</evidence>
<evidence type="ECO:0000269" key="6">
    <source>
    </source>
</evidence>
<evidence type="ECO:0000269" key="7">
    <source>
    </source>
</evidence>
<evidence type="ECO:0000269" key="8">
    <source>
    </source>
</evidence>
<evidence type="ECO:0000269" key="9">
    <source>
    </source>
</evidence>
<evidence type="ECO:0000269" key="10">
    <source>
    </source>
</evidence>
<evidence type="ECO:0000269" key="11">
    <source>
    </source>
</evidence>
<evidence type="ECO:0000269" key="12">
    <source>
    </source>
</evidence>
<evidence type="ECO:0000269" key="13">
    <source>
    </source>
</evidence>
<evidence type="ECO:0000303" key="14">
    <source>
    </source>
</evidence>
<evidence type="ECO:0000303" key="15">
    <source>
    </source>
</evidence>
<evidence type="ECO:0000305" key="16"/>
<evidence type="ECO:0000305" key="17">
    <source>
    </source>
</evidence>
<evidence type="ECO:0007744" key="18">
    <source>
    </source>
</evidence>
<evidence type="ECO:0007744" key="19">
    <source>
    </source>
</evidence>
<evidence type="ECO:0007744" key="20">
    <source>
    </source>
</evidence>
<evidence type="ECO:0007744" key="21">
    <source>
    </source>
</evidence>
<evidence type="ECO:0007829" key="22">
    <source>
        <dbReference type="PDB" id="7R5S"/>
    </source>
</evidence>
<accession>Q13352</accession>
<accession>B2R7D8</accession>
<accession>Q13353</accession>
<accession>Q5RJ42</accession>
<accession>Q5RJ44</accession>
<accession>Q5RJ45</accession>
<accession>Q7KYX2</accession>
<accession>Q96CD5</accession>
<accession>Q9UKB6</accession>
<name>CENPR_HUMAN</name>
<dbReference type="EMBL" id="U37139">
    <property type="protein sequence ID" value="AAC50295.1"/>
    <property type="molecule type" value="mRNA"/>
</dbReference>
<dbReference type="EMBL" id="U37139">
    <property type="protein sequence ID" value="AAC50294.1"/>
    <property type="molecule type" value="mRNA"/>
</dbReference>
<dbReference type="EMBL" id="AF175306">
    <property type="protein sequence ID" value="AAF00239.1"/>
    <property type="molecule type" value="mRNA"/>
</dbReference>
<dbReference type="EMBL" id="AK312944">
    <property type="protein sequence ID" value="BAG35785.1"/>
    <property type="molecule type" value="mRNA"/>
</dbReference>
<dbReference type="EMBL" id="BX004807">
    <property type="protein sequence ID" value="CAI15771.1"/>
    <property type="molecule type" value="Genomic_DNA"/>
</dbReference>
<dbReference type="EMBL" id="AL592218">
    <property type="protein sequence ID" value="CAI15771.1"/>
    <property type="status" value="JOINED"/>
    <property type="molecule type" value="Genomic_DNA"/>
</dbReference>
<dbReference type="EMBL" id="BX004807">
    <property type="protein sequence ID" value="CAI15772.1"/>
    <property type="molecule type" value="Genomic_DNA"/>
</dbReference>
<dbReference type="EMBL" id="AL592218">
    <property type="protein sequence ID" value="CAI15772.1"/>
    <property type="status" value="JOINED"/>
    <property type="molecule type" value="Genomic_DNA"/>
</dbReference>
<dbReference type="EMBL" id="AL592218">
    <property type="protein sequence ID" value="CAI18958.1"/>
    <property type="molecule type" value="Genomic_DNA"/>
</dbReference>
<dbReference type="EMBL" id="BX004807">
    <property type="protein sequence ID" value="CAI18958.1"/>
    <property type="status" value="JOINED"/>
    <property type="molecule type" value="Genomic_DNA"/>
</dbReference>
<dbReference type="EMBL" id="AL592218">
    <property type="protein sequence ID" value="CAI18959.1"/>
    <property type="molecule type" value="Genomic_DNA"/>
</dbReference>
<dbReference type="EMBL" id="BX004807">
    <property type="protein sequence ID" value="CAI18959.1"/>
    <property type="status" value="JOINED"/>
    <property type="molecule type" value="Genomic_DNA"/>
</dbReference>
<dbReference type="EMBL" id="BC009929">
    <property type="protein sequence ID" value="AAH09929.1"/>
    <property type="molecule type" value="mRNA"/>
</dbReference>
<dbReference type="EMBL" id="BC014385">
    <property type="protein sequence ID" value="AAH14385.1"/>
    <property type="status" value="ALT_INIT"/>
    <property type="molecule type" value="mRNA"/>
</dbReference>
<dbReference type="CCDS" id="CCDS30736.1">
    <molecule id="Q13352-1"/>
</dbReference>
<dbReference type="CCDS" id="CCDS55603.1">
    <molecule id="Q13352-5"/>
</dbReference>
<dbReference type="PIR" id="A57277">
    <property type="entry name" value="A57277"/>
</dbReference>
<dbReference type="RefSeq" id="NP_001193668.1">
    <molecule id="Q13352-5"/>
    <property type="nucleotide sequence ID" value="NM_001206739.2"/>
</dbReference>
<dbReference type="RefSeq" id="NP_001334077.1">
    <property type="nucleotide sequence ID" value="NM_001347148.1"/>
</dbReference>
<dbReference type="RefSeq" id="NP_055103.3">
    <molecule id="Q13352-1"/>
    <property type="nucleotide sequence ID" value="NM_014288.4"/>
</dbReference>
<dbReference type="RefSeq" id="XP_047272532.1">
    <molecule id="Q13352-2"/>
    <property type="nucleotide sequence ID" value="XM_047416576.1"/>
</dbReference>
<dbReference type="RefSeq" id="XP_054191653.1">
    <molecule id="Q13352-2"/>
    <property type="nucleotide sequence ID" value="XM_054335678.1"/>
</dbReference>
<dbReference type="PDB" id="7PB8">
    <property type="method" value="X-ray"/>
    <property type="resolution" value="3.68 A"/>
    <property type="chains" value="R=1-177"/>
</dbReference>
<dbReference type="PDB" id="7PKN">
    <property type="method" value="EM"/>
    <property type="resolution" value="3.20 A"/>
    <property type="chains" value="R=1-177"/>
</dbReference>
<dbReference type="PDB" id="7QOO">
    <property type="method" value="EM"/>
    <property type="resolution" value="4.60 A"/>
    <property type="chains" value="R=1-177"/>
</dbReference>
<dbReference type="PDB" id="7R5S">
    <property type="method" value="EM"/>
    <property type="resolution" value="2.83 A"/>
    <property type="chains" value="R=1-177"/>
</dbReference>
<dbReference type="PDB" id="7R5V">
    <property type="method" value="EM"/>
    <property type="resolution" value="4.55 A"/>
    <property type="chains" value="R=1-177"/>
</dbReference>
<dbReference type="PDB" id="7XHN">
    <property type="method" value="EM"/>
    <property type="resolution" value="3.71 A"/>
    <property type="chains" value="R=1-177"/>
</dbReference>
<dbReference type="PDB" id="7XHO">
    <property type="method" value="EM"/>
    <property type="resolution" value="3.29 A"/>
    <property type="chains" value="R=1-177"/>
</dbReference>
<dbReference type="PDB" id="7YWX">
    <property type="method" value="EM"/>
    <property type="resolution" value="12.00 A"/>
    <property type="chains" value="R=1-177"/>
</dbReference>
<dbReference type="PDB" id="7YYH">
    <property type="method" value="EM"/>
    <property type="resolution" value="8.90 A"/>
    <property type="chains" value="R=1-177"/>
</dbReference>
<dbReference type="PDBsum" id="7PB8"/>
<dbReference type="PDBsum" id="7PKN"/>
<dbReference type="PDBsum" id="7QOO"/>
<dbReference type="PDBsum" id="7R5S"/>
<dbReference type="PDBsum" id="7R5V"/>
<dbReference type="PDBsum" id="7XHN"/>
<dbReference type="PDBsum" id="7XHO"/>
<dbReference type="PDBsum" id="7YWX"/>
<dbReference type="PDBsum" id="7YYH"/>
<dbReference type="EMDB" id="EMD-13473"/>
<dbReference type="EMDB" id="EMD-14098"/>
<dbReference type="EMDB" id="EMD-14336"/>
<dbReference type="EMDB" id="EMD-14341"/>
<dbReference type="EMDB" id="EMD-14351"/>
<dbReference type="EMDB" id="EMD-14375"/>
<dbReference type="EMDB" id="EMD-33196"/>
<dbReference type="EMDB" id="EMD-33197"/>
<dbReference type="SMR" id="Q13352"/>
<dbReference type="BioGRID" id="116992">
    <property type="interactions" value="71"/>
</dbReference>
<dbReference type="ComplexPortal" id="CPX-5646">
    <property type="entry name" value="Kinetochore CCAN complex"/>
</dbReference>
<dbReference type="CORUM" id="Q13352"/>
<dbReference type="ELM" id="Q13352"/>
<dbReference type="FunCoup" id="Q13352">
    <property type="interactions" value="2378"/>
</dbReference>
<dbReference type="IntAct" id="Q13352">
    <property type="interactions" value="98"/>
</dbReference>
<dbReference type="MINT" id="Q13352"/>
<dbReference type="STRING" id="9606.ENSP00000360133"/>
<dbReference type="GlyGen" id="Q13352">
    <property type="glycosylation" value="1 site, 1 O-linked glycan (1 site)"/>
</dbReference>
<dbReference type="iPTMnet" id="Q13352"/>
<dbReference type="PhosphoSitePlus" id="Q13352"/>
<dbReference type="BioMuta" id="ITGB3BP"/>
<dbReference type="DMDM" id="50400855"/>
<dbReference type="jPOST" id="Q13352"/>
<dbReference type="MassIVE" id="Q13352"/>
<dbReference type="PaxDb" id="9606-ENSP00000360133"/>
<dbReference type="PeptideAtlas" id="Q13352"/>
<dbReference type="ProteomicsDB" id="59336">
    <molecule id="Q13352-1"/>
</dbReference>
<dbReference type="ProteomicsDB" id="59337">
    <molecule id="Q13352-2"/>
</dbReference>
<dbReference type="ProteomicsDB" id="59338">
    <molecule id="Q13352-3"/>
</dbReference>
<dbReference type="ProteomicsDB" id="59339">
    <molecule id="Q13352-4"/>
</dbReference>
<dbReference type="ProteomicsDB" id="59340">
    <molecule id="Q13352-5"/>
</dbReference>
<dbReference type="Pumba" id="Q13352"/>
<dbReference type="TopDownProteomics" id="Q13352-1">
    <molecule id="Q13352-1"/>
</dbReference>
<dbReference type="Antibodypedia" id="33352">
    <property type="antibodies" value="217 antibodies from 30 providers"/>
</dbReference>
<dbReference type="DNASU" id="23421"/>
<dbReference type="Ensembl" id="ENST00000271002.15">
    <molecule id="Q13352-1"/>
    <property type="protein sequence ID" value="ENSP00000271002.10"/>
    <property type="gene ID" value="ENSG00000142856.18"/>
</dbReference>
<dbReference type="Ensembl" id="ENST00000371092.7">
    <molecule id="Q13352-5"/>
    <property type="protein sequence ID" value="ENSP00000360133.3"/>
    <property type="gene ID" value="ENSG00000142856.18"/>
</dbReference>
<dbReference type="Ensembl" id="ENST00000489099.5">
    <molecule id="Q13352-2"/>
    <property type="protein sequence ID" value="ENSP00000432904.1"/>
    <property type="gene ID" value="ENSG00000142856.18"/>
</dbReference>
<dbReference type="GeneID" id="23421"/>
<dbReference type="KEGG" id="hsa:23421"/>
<dbReference type="MANE-Select" id="ENST00000271002.15">
    <property type="protein sequence ID" value="ENSP00000271002.10"/>
    <property type="RefSeq nucleotide sequence ID" value="NM_014288.5"/>
    <property type="RefSeq protein sequence ID" value="NP_055103.3"/>
</dbReference>
<dbReference type="UCSC" id="uc001dba.3">
    <molecule id="Q13352-1"/>
    <property type="organism name" value="human"/>
</dbReference>
<dbReference type="AGR" id="HGNC:6157"/>
<dbReference type="CTD" id="23421"/>
<dbReference type="DisGeNET" id="23421"/>
<dbReference type="GeneCards" id="ITGB3BP"/>
<dbReference type="HGNC" id="HGNC:6157">
    <property type="gene designation" value="ITGB3BP"/>
</dbReference>
<dbReference type="HPA" id="ENSG00000142856">
    <property type="expression patterns" value="Low tissue specificity"/>
</dbReference>
<dbReference type="MIM" id="605494">
    <property type="type" value="gene"/>
</dbReference>
<dbReference type="neXtProt" id="NX_Q13352"/>
<dbReference type="OpenTargets" id="ENSG00000142856"/>
<dbReference type="PharmGKB" id="PA29956"/>
<dbReference type="VEuPathDB" id="HostDB:ENSG00000142856"/>
<dbReference type="eggNOG" id="ENOG502S4AR">
    <property type="taxonomic scope" value="Eukaryota"/>
</dbReference>
<dbReference type="GeneTree" id="ENSGT00390000004336"/>
<dbReference type="HOGENOM" id="CLU_122442_0_0_1"/>
<dbReference type="InParanoid" id="Q13352"/>
<dbReference type="OMA" id="FMVVFSK"/>
<dbReference type="OrthoDB" id="8839831at2759"/>
<dbReference type="PAN-GO" id="Q13352">
    <property type="GO annotations" value="1 GO annotation based on evolutionary models"/>
</dbReference>
<dbReference type="PhylomeDB" id="Q13352"/>
<dbReference type="TreeFam" id="TF336291"/>
<dbReference type="PathwayCommons" id="Q13352"/>
<dbReference type="Reactome" id="R-HSA-141444">
    <property type="pathway name" value="Amplification of signal from unattached kinetochores via a MAD2 inhibitory signal"/>
</dbReference>
<dbReference type="Reactome" id="R-HSA-205043">
    <property type="pathway name" value="NRIF signals cell death from the nucleus"/>
</dbReference>
<dbReference type="Reactome" id="R-HSA-2467813">
    <property type="pathway name" value="Separation of Sister Chromatids"/>
</dbReference>
<dbReference type="Reactome" id="R-HSA-2500257">
    <property type="pathway name" value="Resolution of Sister Chromatid Cohesion"/>
</dbReference>
<dbReference type="Reactome" id="R-HSA-5663220">
    <property type="pathway name" value="RHO GTPases Activate Formins"/>
</dbReference>
<dbReference type="Reactome" id="R-HSA-606279">
    <property type="pathway name" value="Deposition of new CENPA-containing nucleosomes at the centromere"/>
</dbReference>
<dbReference type="Reactome" id="R-HSA-68877">
    <property type="pathway name" value="Mitotic Prometaphase"/>
</dbReference>
<dbReference type="Reactome" id="R-HSA-9648025">
    <property type="pathway name" value="EML4 and NUDC in mitotic spindle formation"/>
</dbReference>
<dbReference type="SignaLink" id="Q13352"/>
<dbReference type="SIGNOR" id="Q13352"/>
<dbReference type="BioGRID-ORCS" id="23421">
    <property type="hits" value="15 hits in 1119 CRISPR screens"/>
</dbReference>
<dbReference type="ChiTaRS" id="ITGB3BP">
    <property type="organism name" value="human"/>
</dbReference>
<dbReference type="GeneWiki" id="ITGB3BP"/>
<dbReference type="GenomeRNAi" id="23421"/>
<dbReference type="Pharos" id="Q13352">
    <property type="development level" value="Tbio"/>
</dbReference>
<dbReference type="PRO" id="PR:Q13352"/>
<dbReference type="Proteomes" id="UP000005640">
    <property type="component" value="Chromosome 1"/>
</dbReference>
<dbReference type="RNAct" id="Q13352">
    <property type="molecule type" value="protein"/>
</dbReference>
<dbReference type="Bgee" id="ENSG00000142856">
    <property type="expression patterns" value="Expressed in oocyte and 191 other cell types or tissues"/>
</dbReference>
<dbReference type="GO" id="GO:0005737">
    <property type="term" value="C:cytoplasm"/>
    <property type="evidence" value="ECO:0000304"/>
    <property type="project" value="ProtInc"/>
</dbReference>
<dbReference type="GO" id="GO:0005829">
    <property type="term" value="C:cytosol"/>
    <property type="evidence" value="ECO:0000304"/>
    <property type="project" value="Reactome"/>
</dbReference>
<dbReference type="GO" id="GO:0000939">
    <property type="term" value="C:inner kinetochore"/>
    <property type="evidence" value="ECO:0000353"/>
    <property type="project" value="ComplexPortal"/>
</dbReference>
<dbReference type="GO" id="GO:0016020">
    <property type="term" value="C:membrane"/>
    <property type="evidence" value="ECO:0000304"/>
    <property type="project" value="ProtInc"/>
</dbReference>
<dbReference type="GO" id="GO:0005654">
    <property type="term" value="C:nucleoplasm"/>
    <property type="evidence" value="ECO:0000314"/>
    <property type="project" value="HPA"/>
</dbReference>
<dbReference type="GO" id="GO:0005634">
    <property type="term" value="C:nucleus"/>
    <property type="evidence" value="ECO:0000304"/>
    <property type="project" value="ProtInc"/>
</dbReference>
<dbReference type="GO" id="GO:0006915">
    <property type="term" value="P:apoptotic process"/>
    <property type="evidence" value="ECO:0007669"/>
    <property type="project" value="UniProtKB-KW"/>
</dbReference>
<dbReference type="GO" id="GO:0007155">
    <property type="term" value="P:cell adhesion"/>
    <property type="evidence" value="ECO:0000304"/>
    <property type="project" value="ProtInc"/>
</dbReference>
<dbReference type="GO" id="GO:0051301">
    <property type="term" value="P:cell division"/>
    <property type="evidence" value="ECO:0007669"/>
    <property type="project" value="UniProtKB-KW"/>
</dbReference>
<dbReference type="GO" id="GO:0034080">
    <property type="term" value="P:CENP-A containing chromatin assembly"/>
    <property type="evidence" value="ECO:0007669"/>
    <property type="project" value="InterPro"/>
</dbReference>
<dbReference type="GO" id="GO:0007059">
    <property type="term" value="P:chromosome segregation"/>
    <property type="evidence" value="ECO:0000303"/>
    <property type="project" value="ComplexPortal"/>
</dbReference>
<dbReference type="GO" id="GO:1904036">
    <property type="term" value="P:negative regulation of epithelial cell apoptotic process"/>
    <property type="evidence" value="ECO:0007669"/>
    <property type="project" value="Ensembl"/>
</dbReference>
<dbReference type="GO" id="GO:0050679">
    <property type="term" value="P:positive regulation of epithelial cell proliferation"/>
    <property type="evidence" value="ECO:0007669"/>
    <property type="project" value="Ensembl"/>
</dbReference>
<dbReference type="GO" id="GO:0006355">
    <property type="term" value="P:regulation of DNA-templated transcription"/>
    <property type="evidence" value="ECO:0007669"/>
    <property type="project" value="InterPro"/>
</dbReference>
<dbReference type="GO" id="GO:0007165">
    <property type="term" value="P:signal transduction"/>
    <property type="evidence" value="ECO:0000304"/>
    <property type="project" value="ProtInc"/>
</dbReference>
<dbReference type="InterPro" id="IPR009601">
    <property type="entry name" value="CENP-R"/>
</dbReference>
<dbReference type="PANTHER" id="PTHR15581">
    <property type="entry name" value="CENTROMERE PROTEIN R"/>
    <property type="match status" value="1"/>
</dbReference>
<dbReference type="PANTHER" id="PTHR15581:SF0">
    <property type="entry name" value="CENTROMERE PROTEIN R"/>
    <property type="match status" value="1"/>
</dbReference>
<dbReference type="Pfam" id="PF06729">
    <property type="entry name" value="CENP-R"/>
    <property type="match status" value="1"/>
</dbReference>
<dbReference type="PIRSF" id="PIRSF011860">
    <property type="entry name" value="NRIF3_coact_rcpt"/>
    <property type="match status" value="1"/>
</dbReference>
<reference key="1">
    <citation type="journal article" date="1995" name="J. Cell Biol.">
        <title>Beta 3-endonexin, a novel polypeptide that interacts specifically with the cytoplasmic tail of the integrin beta 3 subunit.</title>
        <authorList>
            <person name="Shattil S.J."/>
            <person name="O'Toole T.E."/>
            <person name="Eigenthaler M.J."/>
            <person name="Thon V."/>
            <person name="Williams M.J."/>
            <person name="Babior B.M."/>
            <person name="Ginsberg M.H."/>
        </authorList>
    </citation>
    <scope>NUCLEOTIDE SEQUENCE [MRNA] (ISOFORMS 2 AND 3)</scope>
    <scope>TISSUE SPECIFICITY</scope>
    <scope>INTERACTION WITH ITGB3</scope>
    <source>
        <tissue>B-cell</tissue>
    </source>
</reference>
<reference key="2">
    <citation type="journal article" date="1999" name="Mol. Cell. Biol.">
        <title>NRIF3 is a novel coactivator mediating functional specificity of nuclear hormone receptors.</title>
        <authorList>
            <person name="Li D."/>
            <person name="Desai-Yajnik V."/>
            <person name="Lo E."/>
            <person name="Schapira M."/>
            <person name="Abagyan R."/>
            <person name="Samuels H.H."/>
        </authorList>
    </citation>
    <scope>NUCLEOTIDE SEQUENCE [MRNA] (ISOFORM 1)</scope>
    <scope>COACTIVATOR FUNCTION</scope>
    <scope>SUBCELLULAR LOCATION</scope>
    <scope>INTERACTION WITH RXRA AND THRA</scope>
    <scope>MUTAGENESIS OF LEU-9 AND 172-LEU--LEU-176</scope>
    <source>
        <tissue>Cervix carcinoma</tissue>
    </source>
</reference>
<reference key="3">
    <citation type="journal article" date="2004" name="Nat. Genet.">
        <title>Complete sequencing and characterization of 21,243 full-length human cDNAs.</title>
        <authorList>
            <person name="Ota T."/>
            <person name="Suzuki Y."/>
            <person name="Nishikawa T."/>
            <person name="Otsuki T."/>
            <person name="Sugiyama T."/>
            <person name="Irie R."/>
            <person name="Wakamatsu A."/>
            <person name="Hayashi K."/>
            <person name="Sato H."/>
            <person name="Nagai K."/>
            <person name="Kimura K."/>
            <person name="Makita H."/>
            <person name="Sekine M."/>
            <person name="Obayashi M."/>
            <person name="Nishi T."/>
            <person name="Shibahara T."/>
            <person name="Tanaka T."/>
            <person name="Ishii S."/>
            <person name="Yamamoto J."/>
            <person name="Saito K."/>
            <person name="Kawai Y."/>
            <person name="Isono Y."/>
            <person name="Nakamura Y."/>
            <person name="Nagahari K."/>
            <person name="Murakami K."/>
            <person name="Yasuda T."/>
            <person name="Iwayanagi T."/>
            <person name="Wagatsuma M."/>
            <person name="Shiratori A."/>
            <person name="Sudo H."/>
            <person name="Hosoiri T."/>
            <person name="Kaku Y."/>
            <person name="Kodaira H."/>
            <person name="Kondo H."/>
            <person name="Sugawara M."/>
            <person name="Takahashi M."/>
            <person name="Kanda K."/>
            <person name="Yokoi T."/>
            <person name="Furuya T."/>
            <person name="Kikkawa E."/>
            <person name="Omura Y."/>
            <person name="Abe K."/>
            <person name="Kamihara K."/>
            <person name="Katsuta N."/>
            <person name="Sato K."/>
            <person name="Tanikawa M."/>
            <person name="Yamazaki M."/>
            <person name="Ninomiya K."/>
            <person name="Ishibashi T."/>
            <person name="Yamashita H."/>
            <person name="Murakawa K."/>
            <person name="Fujimori K."/>
            <person name="Tanai H."/>
            <person name="Kimata M."/>
            <person name="Watanabe M."/>
            <person name="Hiraoka S."/>
            <person name="Chiba Y."/>
            <person name="Ishida S."/>
            <person name="Ono Y."/>
            <person name="Takiguchi S."/>
            <person name="Watanabe S."/>
            <person name="Yosida M."/>
            <person name="Hotuta T."/>
            <person name="Kusano J."/>
            <person name="Kanehori K."/>
            <person name="Takahashi-Fujii A."/>
            <person name="Hara H."/>
            <person name="Tanase T.-O."/>
            <person name="Nomura Y."/>
            <person name="Togiya S."/>
            <person name="Komai F."/>
            <person name="Hara R."/>
            <person name="Takeuchi K."/>
            <person name="Arita M."/>
            <person name="Imose N."/>
            <person name="Musashino K."/>
            <person name="Yuuki H."/>
            <person name="Oshima A."/>
            <person name="Sasaki N."/>
            <person name="Aotsuka S."/>
            <person name="Yoshikawa Y."/>
            <person name="Matsunawa H."/>
            <person name="Ichihara T."/>
            <person name="Shiohata N."/>
            <person name="Sano S."/>
            <person name="Moriya S."/>
            <person name="Momiyama H."/>
            <person name="Satoh N."/>
            <person name="Takami S."/>
            <person name="Terashima Y."/>
            <person name="Suzuki O."/>
            <person name="Nakagawa S."/>
            <person name="Senoh A."/>
            <person name="Mizoguchi H."/>
            <person name="Goto Y."/>
            <person name="Shimizu F."/>
            <person name="Wakebe H."/>
            <person name="Hishigaki H."/>
            <person name="Watanabe T."/>
            <person name="Sugiyama A."/>
            <person name="Takemoto M."/>
            <person name="Kawakami B."/>
            <person name="Yamazaki M."/>
            <person name="Watanabe K."/>
            <person name="Kumagai A."/>
            <person name="Itakura S."/>
            <person name="Fukuzumi Y."/>
            <person name="Fujimori Y."/>
            <person name="Komiyama M."/>
            <person name="Tashiro H."/>
            <person name="Tanigami A."/>
            <person name="Fujiwara T."/>
            <person name="Ono T."/>
            <person name="Yamada K."/>
            <person name="Fujii Y."/>
            <person name="Ozaki K."/>
            <person name="Hirao M."/>
            <person name="Ohmori Y."/>
            <person name="Kawabata A."/>
            <person name="Hikiji T."/>
            <person name="Kobatake N."/>
            <person name="Inagaki H."/>
            <person name="Ikema Y."/>
            <person name="Okamoto S."/>
            <person name="Okitani R."/>
            <person name="Kawakami T."/>
            <person name="Noguchi S."/>
            <person name="Itoh T."/>
            <person name="Shigeta K."/>
            <person name="Senba T."/>
            <person name="Matsumura K."/>
            <person name="Nakajima Y."/>
            <person name="Mizuno T."/>
            <person name="Morinaga M."/>
            <person name="Sasaki M."/>
            <person name="Togashi T."/>
            <person name="Oyama M."/>
            <person name="Hata H."/>
            <person name="Watanabe M."/>
            <person name="Komatsu T."/>
            <person name="Mizushima-Sugano J."/>
            <person name="Satoh T."/>
            <person name="Shirai Y."/>
            <person name="Takahashi Y."/>
            <person name="Nakagawa K."/>
            <person name="Okumura K."/>
            <person name="Nagase T."/>
            <person name="Nomura N."/>
            <person name="Kikuchi H."/>
            <person name="Masuho Y."/>
            <person name="Yamashita R."/>
            <person name="Nakai K."/>
            <person name="Yada T."/>
            <person name="Nakamura Y."/>
            <person name="Ohara O."/>
            <person name="Isogai T."/>
            <person name="Sugano S."/>
        </authorList>
    </citation>
    <scope>NUCLEOTIDE SEQUENCE [LARGE SCALE MRNA] (ISOFORM 1)</scope>
    <source>
        <tissue>Testis</tissue>
    </source>
</reference>
<reference key="4">
    <citation type="journal article" date="2006" name="Nature">
        <title>The DNA sequence and biological annotation of human chromosome 1.</title>
        <authorList>
            <person name="Gregory S.G."/>
            <person name="Barlow K.F."/>
            <person name="McLay K.E."/>
            <person name="Kaul R."/>
            <person name="Swarbreck D."/>
            <person name="Dunham A."/>
            <person name="Scott C.E."/>
            <person name="Howe K.L."/>
            <person name="Woodfine K."/>
            <person name="Spencer C.C.A."/>
            <person name="Jones M.C."/>
            <person name="Gillson C."/>
            <person name="Searle S."/>
            <person name="Zhou Y."/>
            <person name="Kokocinski F."/>
            <person name="McDonald L."/>
            <person name="Evans R."/>
            <person name="Phillips K."/>
            <person name="Atkinson A."/>
            <person name="Cooper R."/>
            <person name="Jones C."/>
            <person name="Hall R.E."/>
            <person name="Andrews T.D."/>
            <person name="Lloyd C."/>
            <person name="Ainscough R."/>
            <person name="Almeida J.P."/>
            <person name="Ambrose K.D."/>
            <person name="Anderson F."/>
            <person name="Andrew R.W."/>
            <person name="Ashwell R.I.S."/>
            <person name="Aubin K."/>
            <person name="Babbage A.K."/>
            <person name="Bagguley C.L."/>
            <person name="Bailey J."/>
            <person name="Beasley H."/>
            <person name="Bethel G."/>
            <person name="Bird C.P."/>
            <person name="Bray-Allen S."/>
            <person name="Brown J.Y."/>
            <person name="Brown A.J."/>
            <person name="Buckley D."/>
            <person name="Burton J."/>
            <person name="Bye J."/>
            <person name="Carder C."/>
            <person name="Chapman J.C."/>
            <person name="Clark S.Y."/>
            <person name="Clarke G."/>
            <person name="Clee C."/>
            <person name="Cobley V."/>
            <person name="Collier R.E."/>
            <person name="Corby N."/>
            <person name="Coville G.J."/>
            <person name="Davies J."/>
            <person name="Deadman R."/>
            <person name="Dunn M."/>
            <person name="Earthrowl M."/>
            <person name="Ellington A.G."/>
            <person name="Errington H."/>
            <person name="Frankish A."/>
            <person name="Frankland J."/>
            <person name="French L."/>
            <person name="Garner P."/>
            <person name="Garnett J."/>
            <person name="Gay L."/>
            <person name="Ghori M.R.J."/>
            <person name="Gibson R."/>
            <person name="Gilby L.M."/>
            <person name="Gillett W."/>
            <person name="Glithero R.J."/>
            <person name="Grafham D.V."/>
            <person name="Griffiths C."/>
            <person name="Griffiths-Jones S."/>
            <person name="Grocock R."/>
            <person name="Hammond S."/>
            <person name="Harrison E.S.I."/>
            <person name="Hart E."/>
            <person name="Haugen E."/>
            <person name="Heath P.D."/>
            <person name="Holmes S."/>
            <person name="Holt K."/>
            <person name="Howden P.J."/>
            <person name="Hunt A.R."/>
            <person name="Hunt S.E."/>
            <person name="Hunter G."/>
            <person name="Isherwood J."/>
            <person name="James R."/>
            <person name="Johnson C."/>
            <person name="Johnson D."/>
            <person name="Joy A."/>
            <person name="Kay M."/>
            <person name="Kershaw J.K."/>
            <person name="Kibukawa M."/>
            <person name="Kimberley A.M."/>
            <person name="King A."/>
            <person name="Knights A.J."/>
            <person name="Lad H."/>
            <person name="Laird G."/>
            <person name="Lawlor S."/>
            <person name="Leongamornlert D.A."/>
            <person name="Lloyd D.M."/>
            <person name="Loveland J."/>
            <person name="Lovell J."/>
            <person name="Lush M.J."/>
            <person name="Lyne R."/>
            <person name="Martin S."/>
            <person name="Mashreghi-Mohammadi M."/>
            <person name="Matthews L."/>
            <person name="Matthews N.S.W."/>
            <person name="McLaren S."/>
            <person name="Milne S."/>
            <person name="Mistry S."/>
            <person name="Moore M.J.F."/>
            <person name="Nickerson T."/>
            <person name="O'Dell C.N."/>
            <person name="Oliver K."/>
            <person name="Palmeiri A."/>
            <person name="Palmer S.A."/>
            <person name="Parker A."/>
            <person name="Patel D."/>
            <person name="Pearce A.V."/>
            <person name="Peck A.I."/>
            <person name="Pelan S."/>
            <person name="Phelps K."/>
            <person name="Phillimore B.J."/>
            <person name="Plumb R."/>
            <person name="Rajan J."/>
            <person name="Raymond C."/>
            <person name="Rouse G."/>
            <person name="Saenphimmachak C."/>
            <person name="Sehra H.K."/>
            <person name="Sheridan E."/>
            <person name="Shownkeen R."/>
            <person name="Sims S."/>
            <person name="Skuce C.D."/>
            <person name="Smith M."/>
            <person name="Steward C."/>
            <person name="Subramanian S."/>
            <person name="Sycamore N."/>
            <person name="Tracey A."/>
            <person name="Tromans A."/>
            <person name="Van Helmond Z."/>
            <person name="Wall M."/>
            <person name="Wallis J.M."/>
            <person name="White S."/>
            <person name="Whitehead S.L."/>
            <person name="Wilkinson J.E."/>
            <person name="Willey D.L."/>
            <person name="Williams H."/>
            <person name="Wilming L."/>
            <person name="Wray P.W."/>
            <person name="Wu Z."/>
            <person name="Coulson A."/>
            <person name="Vaudin M."/>
            <person name="Sulston J.E."/>
            <person name="Durbin R.M."/>
            <person name="Hubbard T."/>
            <person name="Wooster R."/>
            <person name="Dunham I."/>
            <person name="Carter N.P."/>
            <person name="McVean G."/>
            <person name="Ross M.T."/>
            <person name="Harrow J."/>
            <person name="Olson M.V."/>
            <person name="Beck S."/>
            <person name="Rogers J."/>
            <person name="Bentley D.R."/>
        </authorList>
    </citation>
    <scope>NUCLEOTIDE SEQUENCE [LARGE SCALE GENOMIC DNA]</scope>
</reference>
<reference key="5">
    <citation type="journal article" date="2004" name="Genome Res.">
        <title>The status, quality, and expansion of the NIH full-length cDNA project: the Mammalian Gene Collection (MGC).</title>
        <authorList>
            <consortium name="The MGC Project Team"/>
        </authorList>
    </citation>
    <scope>NUCLEOTIDE SEQUENCE [LARGE SCALE MRNA] (ISOFORMS 1 AND 5)</scope>
    <source>
        <tissue>Bone marrow</tissue>
        <tissue>Placenta</tissue>
    </source>
</reference>
<reference key="6">
    <citation type="journal article" date="2002" name="Thromb. Res.">
        <title>Novel alternatively spliced form of beta(3)-endonexin.</title>
        <authorList>
            <person name="Fujimoto T.-T."/>
            <person name="Katsutani S."/>
            <person name="Shimomura T."/>
            <person name="Fujimura K."/>
        </authorList>
    </citation>
    <scope>ALTERNATIVE SPLICING (ISOFORM 4)</scope>
    <scope>SUBCELLULAR LOCATION</scope>
    <scope>TISSUE SPECIFICITY</scope>
    <scope>MUTAGENESIS OF 63-LYS--LYS-65</scope>
</reference>
<reference key="7">
    <citation type="journal article" date="1997" name="J. Cell Biol.">
        <title>Affinity modulation of platelet integrin alphaIIbbeta3 by beta3-endonexin, a selective binding partner of the beta3 integrin cytoplasmic tail.</title>
        <authorList>
            <person name="Kashiwagi H."/>
            <person name="Schwartz M.A."/>
            <person name="Eigenthaler M."/>
            <person name="Davis K.A."/>
            <person name="Ginsberg M.H."/>
            <person name="Shattil S.J."/>
        </authorList>
    </citation>
    <scope>SUBCELLULAR LOCATION</scope>
</reference>
<reference key="8">
    <citation type="journal article" date="2000" name="Biochem. Biophys. Res. Commun.">
        <title>Beta3-endonexin as a novel inhibitor of cyclin A-associated kinase.</title>
        <authorList>
            <person name="Ohtoshi A."/>
            <person name="Maeda T."/>
            <person name="Higashi H."/>
            <person name="Ashizawa S."/>
            <person name="Yamada M."/>
            <person name="Hatakeyama M."/>
        </authorList>
    </citation>
    <scope>INTERACTION WITH CCNA2</scope>
</reference>
<reference key="9">
    <citation type="journal article" date="2001" name="Mol. Cell. Biol.">
        <title>Domain structure of the NRIF3 family of coregulators suggests potential dual roles in transcriptional regulation.</title>
        <authorList>
            <person name="Li D."/>
            <person name="Wang F."/>
            <person name="Samuels H.H."/>
        </authorList>
    </citation>
    <scope>FUNCTION AS A COREPRESSOR</scope>
    <scope>SUBCELLULAR LOCATION</scope>
    <scope>HOMODIMERIZATION</scope>
    <scope>PHOSPHORYLATION AT SER-28</scope>
    <scope>MUTAGENESIS OF SER-28; LEU-89 AND LEU-96</scope>
</reference>
<reference key="10">
    <citation type="journal article" date="2002" name="J. Cell Sci.">
        <title>Role of beta(3)-endonexin in the regulation of NF-kappaB-dependent expression of urokinase-type plasminogen activator receptor.</title>
        <authorList>
            <person name="Besta F."/>
            <person name="Massberg S."/>
            <person name="Brand K."/>
            <person name="Mueller E."/>
            <person name="Page S."/>
            <person name="Gruener S."/>
            <person name="Lorenz M."/>
            <person name="Sadoul K."/>
            <person name="Kolanus W."/>
            <person name="Lengyel E."/>
            <person name="Gawaz M."/>
        </authorList>
    </citation>
    <scope>FUNCTION AS A COREPRESSOR</scope>
    <scope>SUBCELLULAR LOCATION</scope>
    <scope>INTERACTION WITH NFKB1</scope>
    <scope>MUTAGENESIS OF 63-LYS--LYS-66</scope>
</reference>
<reference key="11">
    <citation type="journal article" date="2004" name="Mol. Cell. Biol.">
        <title>The NRIF3 family of transcriptional coregulators induces rapid and profound apoptosis in breast cancer cells.</title>
        <authorList>
            <person name="Li D."/>
            <person name="Das S."/>
            <person name="Yamada T."/>
            <person name="Samuels H.H."/>
        </authorList>
    </citation>
    <scope>FUNCTION</scope>
    <scope>DOMAIN</scope>
    <scope>MUTAGENESIS OF SER-28</scope>
</reference>
<reference key="12">
    <citation type="journal article" date="2004" name="Mol. Cell. Biol.">
        <title>Metastasis-associated protein 1 interacts with NRIF3, an estrogen-inducible nuclear receptor coregulator.</title>
        <authorList>
            <person name="Talukder A.H."/>
            <person name="Gururaj A."/>
            <person name="Mishra S.K."/>
            <person name="Vadlamudi R.K."/>
            <person name="Kumar R."/>
        </authorList>
    </citation>
    <scope>FUNCTION</scope>
    <scope>INDUCTION</scope>
    <scope>INTERACTION WITH MTA1</scope>
</reference>
<reference key="13">
    <citation type="journal article" date="2006" name="Nat. Cell Biol.">
        <title>The CENP-H-I complex is required for the efficient incorporation of newly synthesized CENP-A into centromeres.</title>
        <authorList>
            <person name="Okada M."/>
            <person name="Cheeseman I.M."/>
            <person name="Hori T."/>
            <person name="Okawa K."/>
            <person name="McLeod I.X."/>
            <person name="Yates J.R. III"/>
            <person name="Desai A."/>
            <person name="Fukagawa T."/>
        </authorList>
    </citation>
    <scope>IDENTIFICATION BY MASS SPECTROMETRY</scope>
    <scope>IDENTIFICATION IN A COMPLEX WITH CENPH; CENPI; CENPK; CENPN; CENPO; CENPP; CENPQ AND CENPU</scope>
    <scope>FUNCTION</scope>
    <scope>SUBCELLULAR LOCATION</scope>
</reference>
<reference key="14">
    <citation type="journal article" date="2006" name="Nat. Cell Biol.">
        <title>The human CENP-A centromeric nucleosome-associated complex.</title>
        <authorList>
            <person name="Foltz D.R."/>
            <person name="Jansen L.E.T."/>
            <person name="Black B.E."/>
            <person name="Bailey A.O."/>
            <person name="Yates J.R. III"/>
            <person name="Cleveland D.W."/>
        </authorList>
    </citation>
    <scope>IDENTIFICATION BY MASS SPECTROMETRY</scope>
    <scope>IDENTIFICATION IN THE CENPA-CAD COMPLEX WITH CENPI; CENPK; CENPL; CENPO; CENPP; CENPQ AND CENPS</scope>
</reference>
<reference key="15">
    <citation type="journal article" date="2008" name="Proc. Natl. Acad. Sci. U.S.A.">
        <title>A quantitative atlas of mitotic phosphorylation.</title>
        <authorList>
            <person name="Dephoure N."/>
            <person name="Zhou C."/>
            <person name="Villen J."/>
            <person name="Beausoleil S.A."/>
            <person name="Bakalarski C.E."/>
            <person name="Elledge S.J."/>
            <person name="Gygi S.P."/>
        </authorList>
    </citation>
    <scope>PHOSPHORYLATION [LARGE SCALE ANALYSIS] AT SER-17</scope>
    <scope>IDENTIFICATION BY MASS SPECTROMETRY [LARGE SCALE ANALYSIS]</scope>
    <source>
        <tissue>Cervix carcinoma</tissue>
    </source>
</reference>
<reference key="16">
    <citation type="journal article" date="2010" name="Sci. Signal.">
        <title>Quantitative phosphoproteomics reveals widespread full phosphorylation site occupancy during mitosis.</title>
        <authorList>
            <person name="Olsen J.V."/>
            <person name="Vermeulen M."/>
            <person name="Santamaria A."/>
            <person name="Kumar C."/>
            <person name="Miller M.L."/>
            <person name="Jensen L.J."/>
            <person name="Gnad F."/>
            <person name="Cox J."/>
            <person name="Jensen T.S."/>
            <person name="Nigg E.A."/>
            <person name="Brunak S."/>
            <person name="Mann M."/>
        </authorList>
    </citation>
    <scope>PHOSPHORYLATION [LARGE SCALE ANALYSIS] AT SER-17 AND SER-71</scope>
    <scope>IDENTIFICATION BY MASS SPECTROMETRY [LARGE SCALE ANALYSIS]</scope>
    <source>
        <tissue>Cervix carcinoma</tissue>
    </source>
</reference>
<reference key="17">
    <citation type="journal article" date="2013" name="J. Proteome Res.">
        <title>Toward a comprehensive characterization of a human cancer cell phosphoproteome.</title>
        <authorList>
            <person name="Zhou H."/>
            <person name="Di Palma S."/>
            <person name="Preisinger C."/>
            <person name="Peng M."/>
            <person name="Polat A.N."/>
            <person name="Heck A.J."/>
            <person name="Mohammed S."/>
        </authorList>
    </citation>
    <scope>PHOSPHORYLATION [LARGE SCALE ANALYSIS] AT SER-17 AND SER-71</scope>
    <scope>IDENTIFICATION BY MASS SPECTROMETRY [LARGE SCALE ANALYSIS]</scope>
    <source>
        <tissue>Cervix carcinoma</tissue>
        <tissue>Erythroleukemia</tissue>
    </source>
</reference>
<reference key="18">
    <citation type="journal article" date="2017" name="Nat. Struct. Mol. Biol.">
        <title>Site-specific mapping of the human SUMO proteome reveals co-modification with phosphorylation.</title>
        <authorList>
            <person name="Hendriks I.A."/>
            <person name="Lyon D."/>
            <person name="Young C."/>
            <person name="Jensen L.J."/>
            <person name="Vertegaal A.C."/>
            <person name="Nielsen M.L."/>
        </authorList>
    </citation>
    <scope>SUMOYLATION [LARGE SCALE ANALYSIS] AT LYS-8 AND LYS-22</scope>
    <scope>IDENTIFICATION BY MASS SPECTROMETRY [LARGE SCALE ANALYSIS]</scope>
</reference>
<organism>
    <name type="scientific">Homo sapiens</name>
    <name type="common">Human</name>
    <dbReference type="NCBI Taxonomy" id="9606"/>
    <lineage>
        <taxon>Eukaryota</taxon>
        <taxon>Metazoa</taxon>
        <taxon>Chordata</taxon>
        <taxon>Craniata</taxon>
        <taxon>Vertebrata</taxon>
        <taxon>Euteleostomi</taxon>
        <taxon>Mammalia</taxon>
        <taxon>Eutheria</taxon>
        <taxon>Euarchontoglires</taxon>
        <taxon>Primates</taxon>
        <taxon>Haplorrhini</taxon>
        <taxon>Catarrhini</taxon>
        <taxon>Hominidae</taxon>
        <taxon>Homo</taxon>
    </lineage>
</organism>